<evidence type="ECO:0000250" key="1">
    <source>
        <dbReference type="UniProtKB" id="A0A0G2K0D3"/>
    </source>
</evidence>
<evidence type="ECO:0000255" key="2">
    <source>
        <dbReference type="PROSITE-ProRule" id="PRU00406"/>
    </source>
</evidence>
<evidence type="ECO:0000256" key="3">
    <source>
        <dbReference type="SAM" id="MobiDB-lite"/>
    </source>
</evidence>
<evidence type="ECO:0000269" key="4">
    <source>
    </source>
</evidence>
<evidence type="ECO:0000269" key="5">
    <source>
    </source>
</evidence>
<evidence type="ECO:0000269" key="6">
    <source>
    </source>
</evidence>
<evidence type="ECO:0000269" key="7">
    <source>
    </source>
</evidence>
<evidence type="ECO:0000303" key="8">
    <source>
    </source>
</evidence>
<evidence type="ECO:0000305" key="9"/>
<evidence type="ECO:0007744" key="10">
    <source>
        <dbReference type="PDB" id="4Z79"/>
    </source>
</evidence>
<evidence type="ECO:0007744" key="11">
    <source>
        <dbReference type="PDB" id="4Z8G"/>
    </source>
</evidence>
<evidence type="ECO:0007744" key="12">
    <source>
        <dbReference type="PDB" id="4Z94"/>
    </source>
</evidence>
<evidence type="ECO:0007829" key="13">
    <source>
        <dbReference type="PDB" id="4Z79"/>
    </source>
</evidence>
<accession>P29536</accession>
<accession>B1APV6</accession>
<accession>C4AMB1</accession>
<accession>Q68EN2</accession>
<organism>
    <name type="scientific">Homo sapiens</name>
    <name type="common">Human</name>
    <dbReference type="NCBI Taxonomy" id="9606"/>
    <lineage>
        <taxon>Eukaryota</taxon>
        <taxon>Metazoa</taxon>
        <taxon>Chordata</taxon>
        <taxon>Craniata</taxon>
        <taxon>Vertebrata</taxon>
        <taxon>Euteleostomi</taxon>
        <taxon>Mammalia</taxon>
        <taxon>Eutheria</taxon>
        <taxon>Euarchontoglires</taxon>
        <taxon>Primates</taxon>
        <taxon>Haplorrhini</taxon>
        <taxon>Catarrhini</taxon>
        <taxon>Hominidae</taxon>
        <taxon>Homo</taxon>
    </lineage>
</organism>
<protein>
    <recommendedName>
        <fullName>Leiomodin-1</fullName>
    </recommendedName>
    <alternativeName>
        <fullName>64 kDa autoantigen 1D</fullName>
    </alternativeName>
    <alternativeName>
        <fullName>64 kDa autoantigen 1D3</fullName>
    </alternativeName>
    <alternativeName>
        <fullName evidence="8">64 kDa autoantigen D1</fullName>
    </alternativeName>
    <alternativeName>
        <fullName>Leiomodin, muscle form</fullName>
    </alternativeName>
    <alternativeName>
        <fullName>Smooth muscle leiomodin</fullName>
        <shortName>SM-Lmod</shortName>
    </alternativeName>
    <alternativeName>
        <fullName>Thyroid-associated ophthalmopathy autoantigen</fullName>
    </alternativeName>
</protein>
<name>LMOD1_HUMAN</name>
<reference key="1">
    <citation type="journal article" date="1991" name="J. Clin. Endocrinol. Metab.">
        <title>Cloning and sequencing of a novel 64-kDa autoantigen recognized by patients with autoimmune thyroid disease.</title>
        <authorList>
            <person name="Dong Q."/>
            <person name="Ludgate M."/>
            <person name="Vassart G."/>
        </authorList>
    </citation>
    <scope>NUCLEOTIDE SEQUENCE [MRNA] (ISOFORM 2)</scope>
    <scope>TISSUE SPECIFICITY</scope>
    <source>
        <tissue>Thyroid</tissue>
    </source>
</reference>
<reference key="2">
    <citation type="journal article" date="2006" name="Nature">
        <title>The DNA sequence and biological annotation of human chromosome 1.</title>
        <authorList>
            <person name="Gregory S.G."/>
            <person name="Barlow K.F."/>
            <person name="McLay K.E."/>
            <person name="Kaul R."/>
            <person name="Swarbreck D."/>
            <person name="Dunham A."/>
            <person name="Scott C.E."/>
            <person name="Howe K.L."/>
            <person name="Woodfine K."/>
            <person name="Spencer C.C.A."/>
            <person name="Jones M.C."/>
            <person name="Gillson C."/>
            <person name="Searle S."/>
            <person name="Zhou Y."/>
            <person name="Kokocinski F."/>
            <person name="McDonald L."/>
            <person name="Evans R."/>
            <person name="Phillips K."/>
            <person name="Atkinson A."/>
            <person name="Cooper R."/>
            <person name="Jones C."/>
            <person name="Hall R.E."/>
            <person name="Andrews T.D."/>
            <person name="Lloyd C."/>
            <person name="Ainscough R."/>
            <person name="Almeida J.P."/>
            <person name="Ambrose K.D."/>
            <person name="Anderson F."/>
            <person name="Andrew R.W."/>
            <person name="Ashwell R.I.S."/>
            <person name="Aubin K."/>
            <person name="Babbage A.K."/>
            <person name="Bagguley C.L."/>
            <person name="Bailey J."/>
            <person name="Beasley H."/>
            <person name="Bethel G."/>
            <person name="Bird C.P."/>
            <person name="Bray-Allen S."/>
            <person name="Brown J.Y."/>
            <person name="Brown A.J."/>
            <person name="Buckley D."/>
            <person name="Burton J."/>
            <person name="Bye J."/>
            <person name="Carder C."/>
            <person name="Chapman J.C."/>
            <person name="Clark S.Y."/>
            <person name="Clarke G."/>
            <person name="Clee C."/>
            <person name="Cobley V."/>
            <person name="Collier R.E."/>
            <person name="Corby N."/>
            <person name="Coville G.J."/>
            <person name="Davies J."/>
            <person name="Deadman R."/>
            <person name="Dunn M."/>
            <person name="Earthrowl M."/>
            <person name="Ellington A.G."/>
            <person name="Errington H."/>
            <person name="Frankish A."/>
            <person name="Frankland J."/>
            <person name="French L."/>
            <person name="Garner P."/>
            <person name="Garnett J."/>
            <person name="Gay L."/>
            <person name="Ghori M.R.J."/>
            <person name="Gibson R."/>
            <person name="Gilby L.M."/>
            <person name="Gillett W."/>
            <person name="Glithero R.J."/>
            <person name="Grafham D.V."/>
            <person name="Griffiths C."/>
            <person name="Griffiths-Jones S."/>
            <person name="Grocock R."/>
            <person name="Hammond S."/>
            <person name="Harrison E.S.I."/>
            <person name="Hart E."/>
            <person name="Haugen E."/>
            <person name="Heath P.D."/>
            <person name="Holmes S."/>
            <person name="Holt K."/>
            <person name="Howden P.J."/>
            <person name="Hunt A.R."/>
            <person name="Hunt S.E."/>
            <person name="Hunter G."/>
            <person name="Isherwood J."/>
            <person name="James R."/>
            <person name="Johnson C."/>
            <person name="Johnson D."/>
            <person name="Joy A."/>
            <person name="Kay M."/>
            <person name="Kershaw J.K."/>
            <person name="Kibukawa M."/>
            <person name="Kimberley A.M."/>
            <person name="King A."/>
            <person name="Knights A.J."/>
            <person name="Lad H."/>
            <person name="Laird G."/>
            <person name="Lawlor S."/>
            <person name="Leongamornlert D.A."/>
            <person name="Lloyd D.M."/>
            <person name="Loveland J."/>
            <person name="Lovell J."/>
            <person name="Lush M.J."/>
            <person name="Lyne R."/>
            <person name="Martin S."/>
            <person name="Mashreghi-Mohammadi M."/>
            <person name="Matthews L."/>
            <person name="Matthews N.S.W."/>
            <person name="McLaren S."/>
            <person name="Milne S."/>
            <person name="Mistry S."/>
            <person name="Moore M.J.F."/>
            <person name="Nickerson T."/>
            <person name="O'Dell C.N."/>
            <person name="Oliver K."/>
            <person name="Palmeiri A."/>
            <person name="Palmer S.A."/>
            <person name="Parker A."/>
            <person name="Patel D."/>
            <person name="Pearce A.V."/>
            <person name="Peck A.I."/>
            <person name="Pelan S."/>
            <person name="Phelps K."/>
            <person name="Phillimore B.J."/>
            <person name="Plumb R."/>
            <person name="Rajan J."/>
            <person name="Raymond C."/>
            <person name="Rouse G."/>
            <person name="Saenphimmachak C."/>
            <person name="Sehra H.K."/>
            <person name="Sheridan E."/>
            <person name="Shownkeen R."/>
            <person name="Sims S."/>
            <person name="Skuce C.D."/>
            <person name="Smith M."/>
            <person name="Steward C."/>
            <person name="Subramanian S."/>
            <person name="Sycamore N."/>
            <person name="Tracey A."/>
            <person name="Tromans A."/>
            <person name="Van Helmond Z."/>
            <person name="Wall M."/>
            <person name="Wallis J.M."/>
            <person name="White S."/>
            <person name="Whitehead S.L."/>
            <person name="Wilkinson J.E."/>
            <person name="Willey D.L."/>
            <person name="Williams H."/>
            <person name="Wilming L."/>
            <person name="Wray P.W."/>
            <person name="Wu Z."/>
            <person name="Coulson A."/>
            <person name="Vaudin M."/>
            <person name="Sulston J.E."/>
            <person name="Durbin R.M."/>
            <person name="Hubbard T."/>
            <person name="Wooster R."/>
            <person name="Dunham I."/>
            <person name="Carter N.P."/>
            <person name="McVean G."/>
            <person name="Ross M.T."/>
            <person name="Harrow J."/>
            <person name="Olson M.V."/>
            <person name="Beck S."/>
            <person name="Rogers J."/>
            <person name="Bentley D.R."/>
        </authorList>
    </citation>
    <scope>NUCLEOTIDE SEQUENCE [LARGE SCALE GENOMIC DNA]</scope>
</reference>
<reference key="3">
    <citation type="journal article" date="2004" name="Genome Res.">
        <title>The status, quality, and expansion of the NIH full-length cDNA project: the Mammalian Gene Collection (MGC).</title>
        <authorList>
            <consortium name="The MGC Project Team"/>
        </authorList>
    </citation>
    <scope>NUCLEOTIDE SEQUENCE [LARGE SCALE MRNA] (ISOFORM 1)</scope>
    <source>
        <tissue>PNS</tissue>
    </source>
</reference>
<reference key="4">
    <citation type="journal article" date="2001" name="Genomics">
        <title>Leiomodins: larger members of the tropomodulin (Tmod) gene family.</title>
        <authorList>
            <person name="Conley C.A."/>
            <person name="Fritz-Six K.L."/>
            <person name="Almenar-Queralt A."/>
            <person name="Fowler V.M."/>
        </authorList>
    </citation>
    <scope>TISSUE SPECIFICITY</scope>
</reference>
<reference key="5">
    <citation type="journal article" date="2016" name="PLoS ONE">
        <title>MEF2C-MYOCD and leiomodin1 suppression by miRNA-214 promotes smooth muscle cell phenotype switching in pulmonary arterial hypertension.</title>
        <authorList>
            <person name="Sahoo S."/>
            <person name="Meijles D.N."/>
            <person name="Al Ghouleh I."/>
            <person name="Tandon M."/>
            <person name="Cifuentes-Pagano E."/>
            <person name="Sembrat J."/>
            <person name="Rojas M."/>
            <person name="Goncharova E."/>
            <person name="Pagano P.J."/>
        </authorList>
    </citation>
    <scope>TISSUE SPECIFICITY</scope>
</reference>
<reference evidence="10 11 12" key="6">
    <citation type="journal article" date="2015" name="Nat. Commun.">
        <title>How Leiomodin and Tropomodulin use a common fold for different actin assembly functions.</title>
        <authorList>
            <person name="Boczkowska M."/>
            <person name="Rebowski G."/>
            <person name="Kremneva E."/>
            <person name="Lappalainen P."/>
            <person name="Dominguez R."/>
        </authorList>
    </citation>
    <scope>X-RAY CRYSTALLOGRAPHY (1.54 ANGSTROMS) OF 299-486</scope>
    <scope>FUNCTION</scope>
    <scope>ACTIN-BINDING</scope>
    <scope>SUBCELLULAR LOCATION</scope>
</reference>
<reference key="7">
    <citation type="journal article" date="2017" name="Proc. Natl. Acad. Sci. U.S.A.">
        <title>Loss of LMOD1 impairs smooth muscle cytocontractility and causes megacystis microcolon intestinal hypoperistalsis syndrome in humans and mice.</title>
        <authorList>
            <person name="Halim D."/>
            <person name="Wilson M.P."/>
            <person name="Oliver D."/>
            <person name="Brosens E."/>
            <person name="Verheij J.B."/>
            <person name="Han Y."/>
            <person name="Nanda V."/>
            <person name="Lyu Q."/>
            <person name="Doukas M."/>
            <person name="Stoop H."/>
            <person name="Brouwer R.W."/>
            <person name="van Ijcken W.F."/>
            <person name="Slivano O.J."/>
            <person name="Burns A.J."/>
            <person name="Christie C.K."/>
            <person name="de Mesy Bentley K.L."/>
            <person name="Brooks A.S."/>
            <person name="Tibboel D."/>
            <person name="Xu S."/>
            <person name="Jin Z.G."/>
            <person name="Djuwantono T."/>
            <person name="Yan W."/>
            <person name="Alves M.M."/>
            <person name="Hofstra R.M."/>
            <person name="Miano J.M."/>
        </authorList>
    </citation>
    <scope>VARIANT MMIHS3 370-ARG--GLN-600 DEL</scope>
    <scope>INVOLVEMENT IN MMIHS3</scope>
    <scope>CHARACTERIZATION OF VARIANT MMIHS3 370-ARG--GLN-600 DEL</scope>
    <scope>FUNCTION</scope>
</reference>
<keyword id="KW-0002">3D-structure</keyword>
<keyword id="KW-0009">Actin-binding</keyword>
<keyword id="KW-0025">Alternative splicing</keyword>
<keyword id="KW-0963">Cytoplasm</keyword>
<keyword id="KW-0206">Cytoskeleton</keyword>
<keyword id="KW-0225">Disease variant</keyword>
<keyword id="KW-0597">Phosphoprotein</keyword>
<keyword id="KW-1267">Proteomics identification</keyword>
<keyword id="KW-1185">Reference proteome</keyword>
<keyword id="KW-0677">Repeat</keyword>
<feature type="chain" id="PRO_0000084453" description="Leiomodin-1">
    <location>
        <begin position="1"/>
        <end position="600"/>
    </location>
</feature>
<feature type="repeat" description="1">
    <location>
        <begin position="165"/>
        <end position="180"/>
    </location>
</feature>
<feature type="repeat" description="2">
    <location>
        <begin position="181"/>
        <end position="196"/>
    </location>
</feature>
<feature type="repeat" description="3">
    <location>
        <begin position="197"/>
        <end position="212"/>
    </location>
</feature>
<feature type="repeat" description="4">
    <location>
        <begin position="213"/>
        <end position="228"/>
    </location>
</feature>
<feature type="repeat" description="5">
    <location>
        <begin position="229"/>
        <end position="244"/>
    </location>
</feature>
<feature type="repeat" description="6">
    <location>
        <begin position="245"/>
        <end position="260"/>
    </location>
</feature>
<feature type="repeat" description="7">
    <location>
        <begin position="261"/>
        <end position="276"/>
    </location>
</feature>
<feature type="repeat" description="8">
    <location>
        <begin position="277"/>
        <end position="293"/>
    </location>
</feature>
<feature type="domain" description="WH2" evidence="2">
    <location>
        <begin position="574"/>
        <end position="593"/>
    </location>
</feature>
<feature type="region of interest" description="Disordered" evidence="3">
    <location>
        <begin position="38"/>
        <end position="61"/>
    </location>
</feature>
<feature type="region of interest" description="Disordered" evidence="3">
    <location>
        <begin position="80"/>
        <end position="324"/>
    </location>
</feature>
<feature type="region of interest" description="8 X approximate tandem repeats">
    <location>
        <begin position="165"/>
        <end position="293"/>
    </location>
</feature>
<feature type="region of interest" description="Disordered" evidence="3">
    <location>
        <begin position="472"/>
        <end position="573"/>
    </location>
</feature>
<feature type="region of interest" description="5 X 4 AA approximate tandem repeats">
    <location>
        <begin position="508"/>
        <end position="527"/>
    </location>
</feature>
<feature type="compositionally biased region" description="Basic and acidic residues" evidence="3">
    <location>
        <begin position="80"/>
        <end position="127"/>
    </location>
</feature>
<feature type="compositionally biased region" description="Basic and acidic residues" evidence="3">
    <location>
        <begin position="134"/>
        <end position="240"/>
    </location>
</feature>
<feature type="compositionally biased region" description="Basic and acidic residues" evidence="3">
    <location>
        <begin position="247"/>
        <end position="256"/>
    </location>
</feature>
<feature type="compositionally biased region" description="Basic and acidic residues" evidence="3">
    <location>
        <begin position="263"/>
        <end position="292"/>
    </location>
</feature>
<feature type="compositionally biased region" description="Basic and acidic residues" evidence="3">
    <location>
        <begin position="472"/>
        <end position="497"/>
    </location>
</feature>
<feature type="compositionally biased region" description="Pro residues" evidence="3">
    <location>
        <begin position="510"/>
        <end position="522"/>
    </location>
</feature>
<feature type="compositionally biased region" description="Pro residues" evidence="3">
    <location>
        <begin position="532"/>
        <end position="543"/>
    </location>
</feature>
<feature type="modified residue" description="Phosphoserine" evidence="1">
    <location>
        <position position="12"/>
    </location>
</feature>
<feature type="modified residue" description="Phosphoserine" evidence="1">
    <location>
        <position position="85"/>
    </location>
</feature>
<feature type="modified residue" description="Phosphoserine" evidence="1">
    <location>
        <position position="135"/>
    </location>
</feature>
<feature type="modified residue" description="Phosphoserine" evidence="1">
    <location>
        <position position="555"/>
    </location>
</feature>
<feature type="splice variant" id="VSP_035745" description="In isoform 2." evidence="8">
    <location>
        <begin position="1"/>
        <end position="28"/>
    </location>
</feature>
<feature type="sequence variant" id="VAR_021839" description="In dbSNP:rs2820312.">
    <original>T</original>
    <variation>M</variation>
    <location>
        <position position="295"/>
    </location>
</feature>
<feature type="sequence variant" id="VAR_085835" description="In MMIHS3; markedly reduced LMOD1 protein levels in homozygous patient cells." evidence="7">
    <location>
        <begin position="370"/>
        <end position="600"/>
    </location>
</feature>
<feature type="sequence conflict" description="In Ref. 1; CAA38101." evidence="9" ref="1">
    <original>E</original>
    <variation>Q</variation>
    <location>
        <position position="102"/>
    </location>
</feature>
<feature type="sequence conflict" description="In Ref. 1; CAA38101." evidence="9" ref="1">
    <original>D</original>
    <variation>N</variation>
    <location>
        <position position="118"/>
    </location>
</feature>
<feature type="sequence conflict" description="In Ref. 1; CAA38101." evidence="9" ref="1">
    <original>S</original>
    <variation>G</variation>
    <location>
        <position position="194"/>
    </location>
</feature>
<feature type="sequence conflict" description="In Ref. 1; CAA38101." evidence="9" ref="1">
    <original>T</original>
    <variation>S</variation>
    <location>
        <position position="446"/>
    </location>
</feature>
<feature type="helix" evidence="13">
    <location>
        <begin position="319"/>
        <end position="326"/>
    </location>
</feature>
<feature type="strand" evidence="13">
    <location>
        <begin position="334"/>
        <end position="336"/>
    </location>
</feature>
<feature type="helix" evidence="13">
    <location>
        <begin position="345"/>
        <end position="355"/>
    </location>
</feature>
<feature type="strand" evidence="13">
    <location>
        <begin position="363"/>
        <end position="365"/>
    </location>
</feature>
<feature type="helix" evidence="13">
    <location>
        <begin position="373"/>
        <end position="385"/>
    </location>
</feature>
<feature type="strand" evidence="13">
    <location>
        <begin position="391"/>
        <end position="393"/>
    </location>
</feature>
<feature type="helix" evidence="13">
    <location>
        <begin position="401"/>
        <end position="410"/>
    </location>
</feature>
<feature type="helix" evidence="13">
    <location>
        <begin position="411"/>
        <end position="413"/>
    </location>
</feature>
<feature type="strand" evidence="13">
    <location>
        <begin position="419"/>
        <end position="421"/>
    </location>
</feature>
<feature type="helix" evidence="13">
    <location>
        <begin position="431"/>
        <end position="441"/>
    </location>
</feature>
<feature type="strand" evidence="13">
    <location>
        <begin position="449"/>
        <end position="451"/>
    </location>
</feature>
<feature type="helix" evidence="13">
    <location>
        <begin position="457"/>
        <end position="484"/>
    </location>
</feature>
<sequence>MSRVAKYRRQVSEDPDIDSLLETLSPEEMEELEKELDVVDPDGSVPVGLRQRNQTEKQSTGVYNREAMLNFCEKETKKLMQREMSMDESKQVETKTDAKNGEERGRDASKKALGPRRDSDLGKEPKRGGLKKSFSRDRDEAGGKSGEKPKEEKIIRGIDKGRVRAAVDKKEAGKDGRGEERAVATKKEEEKKGSDRNTGLSRDKDKKREEMKEVAKKEDDEKVKGERRNTDTRKEGEKMKRAGGNTDMKKEDEKVKRGTGNTDTKKDDEKVKKNEPLHEKEAKDDSKTKTPEKQTPSGPTKPSEGPAKVEEEAAPSIFDEPLERVKNNDPEMTEVNVNNSDCITNEILVRFTEALEFNTVVKLFALANTRADDHVAFAIAIMLKANKTITSLNLDSNHITGKGILAIFRALLQNNTLTELRFHNQRHICGGKTEMEIAKLLKENTTLLKLGYHFELAGPRMTVTNLLSRNMDKQRQKRLQEQRQAQEAKGEKKDLLEVPKAGAVAKGSPKPSPQPSPKPSPKNSPKKGGAPAAPPPPPPPLAPPLIMENLKNSLSPATQRKMGDKVLPAQEKNSRDQLLAAIRSSNLKQLKKVEVPKLLQ</sequence>
<comment type="function">
    <text evidence="5 7">Required for proper contractility of visceral smooth muscle cells (PubMed:28292896). Mediates nucleation of actin filaments.</text>
</comment>
<comment type="subcellular location">
    <subcellularLocation>
        <location evidence="5">Cytoplasm</location>
        <location evidence="5">Myofibril</location>
        <location evidence="5">Sarcomere</location>
    </subcellularLocation>
    <subcellularLocation>
        <location evidence="1">Cytoplasm</location>
        <location evidence="1">Cytoskeleton</location>
    </subcellularLocation>
    <text evidence="1">Colocalizes with actin filaments in sarcomeres.</text>
</comment>
<comment type="alternative products">
    <event type="alternative splicing"/>
    <isoform>
        <id>P29536-1</id>
        <name>1</name>
        <sequence type="displayed"/>
    </isoform>
    <isoform>
        <id>P29536-2</id>
        <name>2</name>
        <sequence type="described" ref="VSP_035745"/>
    </isoform>
</comment>
<comment type="tissue specificity">
    <text evidence="4 6">Detected in lung vascular smooth muscle (at protein level) (PubMed:27144530). Detected in thyroid and extraocular smooth muscle, but not skeletal muscle (PubMed:2026759). Detected in heart, aorta, skeletal muscle, colon, urinary bladder, uterus, stomach, and small intestine (PubMed:11318603).</text>
</comment>
<comment type="disease" evidence="7">
    <disease id="DI-06129">
        <name>Megacystis-microcolon-intestinal hypoperistalsis syndrome 3</name>
        <acronym>MMIHS3</acronym>
        <description>A form of megacystis-microcolon-intestinal hypoperistalsis syndrome, a congenital visceral myopathy primarily affecting females, and characterized by loss of smooth muscle contraction in the bladder and intestine. Affected individuals present at birth with functional obstruction of intestine, microcolon, dilation of bladder, and secondary hydronephrosis. The majority of cases have a fatal outcome due to malnutrition and sepsis, followed by multiorgan failure. MMIHS3 inheritance is autosomal recessive.</description>
        <dbReference type="MIM" id="619362"/>
    </disease>
    <text>The disease is caused by variants affecting the gene represented in this entry.</text>
</comment>
<comment type="similarity">
    <text evidence="9">Belongs to the tropomodulin family.</text>
</comment>
<proteinExistence type="evidence at protein level"/>
<gene>
    <name type="primary">LMOD1</name>
</gene>
<dbReference type="EMBL" id="X54162">
    <property type="protein sequence ID" value="CAA38101.1"/>
    <property type="molecule type" value="mRNA"/>
</dbReference>
<dbReference type="EMBL" id="AC099676">
    <property type="status" value="NOT_ANNOTATED_CDS"/>
    <property type="molecule type" value="Genomic_DNA"/>
</dbReference>
<dbReference type="EMBL" id="AL513217">
    <property type="status" value="NOT_ANNOTATED_CDS"/>
    <property type="molecule type" value="Genomic_DNA"/>
</dbReference>
<dbReference type="EMBL" id="BC080187">
    <property type="protein sequence ID" value="AAH80187.1"/>
    <property type="molecule type" value="mRNA"/>
</dbReference>
<dbReference type="CCDS" id="CCDS53457.1">
    <molecule id="P29536-1"/>
</dbReference>
<dbReference type="PIR" id="S18732">
    <property type="entry name" value="S18732"/>
</dbReference>
<dbReference type="RefSeq" id="NP_036266.2">
    <molecule id="P29536-1"/>
    <property type="nucleotide sequence ID" value="NM_012134.3"/>
</dbReference>
<dbReference type="PDB" id="4Z79">
    <property type="method" value="X-ray"/>
    <property type="resolution" value="1.54 A"/>
    <property type="chains" value="A=299-486"/>
</dbReference>
<dbReference type="PDB" id="4Z8G">
    <property type="method" value="X-ray"/>
    <property type="resolution" value="2.10 A"/>
    <property type="chains" value="A=364-486"/>
</dbReference>
<dbReference type="PDB" id="4Z94">
    <property type="method" value="X-ray"/>
    <property type="resolution" value="2.40 A"/>
    <property type="chains" value="G=364-486"/>
</dbReference>
<dbReference type="PDBsum" id="4Z79"/>
<dbReference type="PDBsum" id="4Z8G"/>
<dbReference type="PDBsum" id="4Z94"/>
<dbReference type="SMR" id="P29536"/>
<dbReference type="BioGRID" id="117334">
    <property type="interactions" value="8"/>
</dbReference>
<dbReference type="FunCoup" id="P29536">
    <property type="interactions" value="104"/>
</dbReference>
<dbReference type="IntAct" id="P29536">
    <property type="interactions" value="4"/>
</dbReference>
<dbReference type="MINT" id="P29536"/>
<dbReference type="STRING" id="9606.ENSP00000356257"/>
<dbReference type="GlyGen" id="P29536">
    <property type="glycosylation" value="2 sites, 1 O-linked glycan (1 site)"/>
</dbReference>
<dbReference type="iPTMnet" id="P29536"/>
<dbReference type="MetOSite" id="P29536"/>
<dbReference type="PhosphoSitePlus" id="P29536"/>
<dbReference type="BioMuta" id="LMOD1"/>
<dbReference type="DMDM" id="325511399"/>
<dbReference type="jPOST" id="P29536"/>
<dbReference type="MassIVE" id="P29536"/>
<dbReference type="PaxDb" id="9606-ENSP00000356257"/>
<dbReference type="PeptideAtlas" id="P29536"/>
<dbReference type="ProteomicsDB" id="54584">
    <molecule id="P29536-1"/>
</dbReference>
<dbReference type="ProteomicsDB" id="54585">
    <molecule id="P29536-2"/>
</dbReference>
<dbReference type="Pumba" id="P29536"/>
<dbReference type="Antibodypedia" id="34518">
    <property type="antibodies" value="159 antibodies from 28 providers"/>
</dbReference>
<dbReference type="DNASU" id="25802"/>
<dbReference type="Ensembl" id="ENST00000367288.5">
    <molecule id="P29536-1"/>
    <property type="protein sequence ID" value="ENSP00000356257.4"/>
    <property type="gene ID" value="ENSG00000163431.14"/>
</dbReference>
<dbReference type="GeneID" id="25802"/>
<dbReference type="KEGG" id="hsa:25802"/>
<dbReference type="MANE-Select" id="ENST00000367288.5">
    <property type="protein sequence ID" value="ENSP00000356257.4"/>
    <property type="RefSeq nucleotide sequence ID" value="NM_012134.3"/>
    <property type="RefSeq protein sequence ID" value="NP_036266.2"/>
</dbReference>
<dbReference type="UCSC" id="uc057oju.1">
    <molecule id="P29536-1"/>
    <property type="organism name" value="human"/>
</dbReference>
<dbReference type="AGR" id="HGNC:6647"/>
<dbReference type="CTD" id="25802"/>
<dbReference type="DisGeNET" id="25802"/>
<dbReference type="GeneCards" id="LMOD1"/>
<dbReference type="HGNC" id="HGNC:6647">
    <property type="gene designation" value="LMOD1"/>
</dbReference>
<dbReference type="HPA" id="ENSG00000163431">
    <property type="expression patterns" value="Tissue enhanced (intestine)"/>
</dbReference>
<dbReference type="MalaCards" id="LMOD1"/>
<dbReference type="MIM" id="602715">
    <property type="type" value="gene"/>
</dbReference>
<dbReference type="MIM" id="619362">
    <property type="type" value="phenotype"/>
</dbReference>
<dbReference type="neXtProt" id="NX_P29536"/>
<dbReference type="OpenTargets" id="ENSG00000163431"/>
<dbReference type="Orphanet" id="2241">
    <property type="disease" value="Megacystis-microcolon-intestinal hypoperistalsis syndrome"/>
</dbReference>
<dbReference type="PharmGKB" id="PA30413"/>
<dbReference type="VEuPathDB" id="HostDB:ENSG00000163431"/>
<dbReference type="eggNOG" id="KOG3735">
    <property type="taxonomic scope" value="Eukaryota"/>
</dbReference>
<dbReference type="GeneTree" id="ENSGT00940000159825"/>
<dbReference type="HOGENOM" id="CLU_031052_4_0_1"/>
<dbReference type="InParanoid" id="P29536"/>
<dbReference type="OMA" id="ELKMDMM"/>
<dbReference type="OrthoDB" id="2163268at2759"/>
<dbReference type="PAN-GO" id="P29536">
    <property type="GO annotations" value="7 GO annotations based on evolutionary models"/>
</dbReference>
<dbReference type="PhylomeDB" id="P29536"/>
<dbReference type="TreeFam" id="TF315841"/>
<dbReference type="PathwayCommons" id="P29536"/>
<dbReference type="Reactome" id="R-HSA-445355">
    <property type="pathway name" value="Smooth Muscle Contraction"/>
</dbReference>
<dbReference type="SignaLink" id="P29536"/>
<dbReference type="BioGRID-ORCS" id="25802">
    <property type="hits" value="21 hits in 1149 CRISPR screens"/>
</dbReference>
<dbReference type="ChiTaRS" id="LMOD1">
    <property type="organism name" value="human"/>
</dbReference>
<dbReference type="EvolutionaryTrace" id="P29536"/>
<dbReference type="GenomeRNAi" id="25802"/>
<dbReference type="Pharos" id="P29536">
    <property type="development level" value="Tbio"/>
</dbReference>
<dbReference type="PRO" id="PR:P29536"/>
<dbReference type="Proteomes" id="UP000005640">
    <property type="component" value="Chromosome 1"/>
</dbReference>
<dbReference type="RNAct" id="P29536">
    <property type="molecule type" value="protein"/>
</dbReference>
<dbReference type="Bgee" id="ENSG00000163431">
    <property type="expression patterns" value="Expressed in popliteal artery and 169 other cell types or tissues"/>
</dbReference>
<dbReference type="ExpressionAtlas" id="P29536">
    <property type="expression patterns" value="baseline and differential"/>
</dbReference>
<dbReference type="GO" id="GO:0005884">
    <property type="term" value="C:actin filament"/>
    <property type="evidence" value="ECO:0000250"/>
    <property type="project" value="UniProtKB"/>
</dbReference>
<dbReference type="GO" id="GO:0005856">
    <property type="term" value="C:cytoskeleton"/>
    <property type="evidence" value="ECO:0000318"/>
    <property type="project" value="GO_Central"/>
</dbReference>
<dbReference type="GO" id="GO:0005829">
    <property type="term" value="C:cytosol"/>
    <property type="evidence" value="ECO:0000314"/>
    <property type="project" value="HPA"/>
</dbReference>
<dbReference type="GO" id="GO:0016020">
    <property type="term" value="C:membrane"/>
    <property type="evidence" value="ECO:0000304"/>
    <property type="project" value="ProtInc"/>
</dbReference>
<dbReference type="GO" id="GO:0030016">
    <property type="term" value="C:myofibril"/>
    <property type="evidence" value="ECO:0000314"/>
    <property type="project" value="UniProtKB"/>
</dbReference>
<dbReference type="GO" id="GO:0030017">
    <property type="term" value="C:sarcomere"/>
    <property type="evidence" value="ECO:0000250"/>
    <property type="project" value="UniProtKB"/>
</dbReference>
<dbReference type="GO" id="GO:0005865">
    <property type="term" value="C:striated muscle thin filament"/>
    <property type="evidence" value="ECO:0000318"/>
    <property type="project" value="GO_Central"/>
</dbReference>
<dbReference type="GO" id="GO:0003779">
    <property type="term" value="F:actin binding"/>
    <property type="evidence" value="ECO:0007669"/>
    <property type="project" value="UniProtKB-KW"/>
</dbReference>
<dbReference type="GO" id="GO:0005523">
    <property type="term" value="F:tropomyosin binding"/>
    <property type="evidence" value="ECO:0000318"/>
    <property type="project" value="GO_Central"/>
</dbReference>
<dbReference type="GO" id="GO:0007015">
    <property type="term" value="P:actin filament organization"/>
    <property type="evidence" value="ECO:0000318"/>
    <property type="project" value="GO_Central"/>
</dbReference>
<dbReference type="GO" id="GO:0045010">
    <property type="term" value="P:actin nucleation"/>
    <property type="evidence" value="ECO:0000314"/>
    <property type="project" value="UniProtKB"/>
</dbReference>
<dbReference type="GO" id="GO:0006936">
    <property type="term" value="P:muscle contraction"/>
    <property type="evidence" value="ECO:0000318"/>
    <property type="project" value="GO_Central"/>
</dbReference>
<dbReference type="GO" id="GO:0030239">
    <property type="term" value="P:myofibril assembly"/>
    <property type="evidence" value="ECO:0000318"/>
    <property type="project" value="GO_Central"/>
</dbReference>
<dbReference type="GO" id="GO:0051694">
    <property type="term" value="P:pointed-end actin filament capping"/>
    <property type="evidence" value="ECO:0007669"/>
    <property type="project" value="InterPro"/>
</dbReference>
<dbReference type="GO" id="GO:0030838">
    <property type="term" value="P:positive regulation of actin filament polymerization"/>
    <property type="evidence" value="ECO:0000314"/>
    <property type="project" value="UniProtKB"/>
</dbReference>
<dbReference type="DisProt" id="DP02368"/>
<dbReference type="FunFam" id="3.80.10.10:FF:000083">
    <property type="entry name" value="Leiomodin 1"/>
    <property type="match status" value="1"/>
</dbReference>
<dbReference type="Gene3D" id="3.80.10.10">
    <property type="entry name" value="Ribonuclease Inhibitor"/>
    <property type="match status" value="1"/>
</dbReference>
<dbReference type="InterPro" id="IPR032675">
    <property type="entry name" value="LRR_dom_sf"/>
</dbReference>
<dbReference type="InterPro" id="IPR004934">
    <property type="entry name" value="TMOD"/>
</dbReference>
<dbReference type="InterPro" id="IPR003124">
    <property type="entry name" value="WH2_dom"/>
</dbReference>
<dbReference type="PANTHER" id="PTHR10901:SF5">
    <property type="entry name" value="LEIOMODIN-1"/>
    <property type="match status" value="1"/>
</dbReference>
<dbReference type="PANTHER" id="PTHR10901">
    <property type="entry name" value="TROPOMODULIN"/>
    <property type="match status" value="1"/>
</dbReference>
<dbReference type="Pfam" id="PF03250">
    <property type="entry name" value="Tropomodulin"/>
    <property type="match status" value="1"/>
</dbReference>
<dbReference type="Pfam" id="PF02205">
    <property type="entry name" value="WH2"/>
    <property type="match status" value="1"/>
</dbReference>
<dbReference type="SMART" id="SM00246">
    <property type="entry name" value="WH2"/>
    <property type="match status" value="1"/>
</dbReference>
<dbReference type="SUPFAM" id="SSF52047">
    <property type="entry name" value="RNI-like"/>
    <property type="match status" value="1"/>
</dbReference>
<dbReference type="PROSITE" id="PS51082">
    <property type="entry name" value="WH2"/>
    <property type="match status" value="1"/>
</dbReference>